<name>COOH_RHORU</name>
<protein>
    <recommendedName>
        <fullName>Carbon monoxide-induced hydrogenase</fullName>
    </recommendedName>
</protein>
<reference key="1">
    <citation type="journal article" date="1996" name="J. Bacteriol.">
        <title>Characterization of the CO-induced, CO-tolerant hydrogenase from Rhodospirillum rubrum and the gene encoding the large subunit of the enzyme.</title>
        <authorList>
            <person name="Fox J.D."/>
            <person name="Kerby R.L."/>
            <person name="Roberts G.P."/>
            <person name="Ludden P.W."/>
        </authorList>
    </citation>
    <scope>NUCLEOTIDE SEQUENCE [GENOMIC DNA]</scope>
    <source>
        <strain>UR2</strain>
    </source>
</reference>
<reference key="2">
    <citation type="journal article" date="1992" name="J. Bacteriol.">
        <title>Genetic and physiological characterization of the Rhodospirillum rubrum carbon monoxide dehydrogenase system.</title>
        <authorList>
            <person name="Kerby R.L."/>
            <person name="Hong S.S."/>
            <person name="Ensign S.A."/>
            <person name="Coppoc L.J."/>
            <person name="Ludden P.W."/>
            <person name="Roberts G.P."/>
        </authorList>
    </citation>
    <scope>NUCLEOTIDE SEQUENCE [GENOMIC DNA] OF 174-361</scope>
    <source>
        <strain>UR1</strain>
    </source>
</reference>
<sequence length="361" mass="40280">MSTYTIPVGPLHVALEEPMYFRIEVDGEKVVSVDITAGHVHRGIEYLATKRNIYQNIVLTERVCSLCSNSHPQTYCMALESITGMVVPPRAQYLRVIADETKRVASHMFNVAILAHIVGFDSLFMHVMEAREIMQDTKEAVFGNRMDIAAMAIGGVKYDLDKDGRDYFIGQLDKLEPTLRDEIIPLYQTNPSIVDRTRGIGVLSAADCVDYGLMGPVARGSGHAYDVRKQAPYAVYDRLDFEMALGEHGDVWSRAMVRWQEALTSIGLIRQCLRDMPDGPTKAGPVPPIPAGEAVAKTEAPRGELIYYLKTNGTDRPERLKWRVPTYMNWDALNVMMAGARISDIPLIVNSIDPCISCTER</sequence>
<feature type="chain" id="PRO_0000090023" description="Carbon monoxide-induced hydrogenase">
    <location>
        <begin position="1"/>
        <end position="361"/>
    </location>
</feature>
<feature type="binding site" evidence="1">
    <location>
        <position position="64"/>
    </location>
    <ligand>
        <name>Ni(2+)</name>
        <dbReference type="ChEBI" id="CHEBI:49786"/>
    </ligand>
</feature>
<feature type="binding site" evidence="1">
    <location>
        <position position="67"/>
    </location>
    <ligand>
        <name>Ni(2+)</name>
        <dbReference type="ChEBI" id="CHEBI:49786"/>
    </ligand>
</feature>
<feature type="binding site" evidence="1">
    <location>
        <position position="355"/>
    </location>
    <ligand>
        <name>Ni(2+)</name>
        <dbReference type="ChEBI" id="CHEBI:49786"/>
    </ligand>
</feature>
<feature type="binding site" evidence="1">
    <location>
        <position position="358"/>
    </location>
    <ligand>
        <name>Ni(2+)</name>
        <dbReference type="ChEBI" id="CHEBI:49786"/>
    </ligand>
</feature>
<comment type="function">
    <text>The carbon monoxide dehydrogenase (CODH) oxidizes carbon monoxide coupled, via CooF, to the reduction of a hydrogen cation by a hydrogenase (probably CooH).</text>
</comment>
<comment type="cofactor">
    <cofactor evidence="1">
        <name>Ni(2+)</name>
        <dbReference type="ChEBI" id="CHEBI:49786"/>
    </cofactor>
</comment>
<comment type="similarity">
    <text evidence="2">To E.coli formate hydrogenlyase hydrogenase isozyme 3 and to bovine mitochondrial NADH-ubiquinone oxidoreductase.</text>
</comment>
<proteinExistence type="predicted"/>
<evidence type="ECO:0000250" key="1"/>
<evidence type="ECO:0000305" key="2"/>
<gene>
    <name type="primary">cooH</name>
</gene>
<organism>
    <name type="scientific">Rhodospirillum rubrum</name>
    <dbReference type="NCBI Taxonomy" id="1085"/>
    <lineage>
        <taxon>Bacteria</taxon>
        <taxon>Pseudomonadati</taxon>
        <taxon>Pseudomonadota</taxon>
        <taxon>Alphaproteobacteria</taxon>
        <taxon>Rhodospirillales</taxon>
        <taxon>Rhodospirillaceae</taxon>
        <taxon>Rhodospirillum</taxon>
    </lineage>
</organism>
<dbReference type="EMBL" id="U65510">
    <property type="protein sequence ID" value="AAC45121.1"/>
    <property type="molecule type" value="Genomic_DNA"/>
</dbReference>
<dbReference type="PIR" id="T51319">
    <property type="entry name" value="T51319"/>
</dbReference>
<dbReference type="RefSeq" id="WP_011389179.1">
    <property type="nucleotide sequence ID" value="NZ_DAMDTZ010000025.1"/>
</dbReference>
<dbReference type="SMR" id="P31895"/>
<dbReference type="TCDB" id="3.D.1.4.3">
    <property type="family name" value="the h+ or na+-translocating nadh dehydrogenase (ndh) family"/>
</dbReference>
<dbReference type="OMA" id="EEPMYFR"/>
<dbReference type="BioCyc" id="MetaCyc:MONOMER-16447"/>
<dbReference type="GO" id="GO:0051287">
    <property type="term" value="F:NAD binding"/>
    <property type="evidence" value="ECO:0007669"/>
    <property type="project" value="InterPro"/>
</dbReference>
<dbReference type="GO" id="GO:0016151">
    <property type="term" value="F:nickel cation binding"/>
    <property type="evidence" value="ECO:0007669"/>
    <property type="project" value="InterPro"/>
</dbReference>
<dbReference type="GO" id="GO:0016651">
    <property type="term" value="F:oxidoreductase activity, acting on NAD(P)H"/>
    <property type="evidence" value="ECO:0007669"/>
    <property type="project" value="InterPro"/>
</dbReference>
<dbReference type="GO" id="GO:0048038">
    <property type="term" value="F:quinone binding"/>
    <property type="evidence" value="ECO:0007669"/>
    <property type="project" value="InterPro"/>
</dbReference>
<dbReference type="Gene3D" id="1.10.645.10">
    <property type="entry name" value="Cytochrome-c3 Hydrogenase, chain B"/>
    <property type="match status" value="1"/>
</dbReference>
<dbReference type="InterPro" id="IPR052197">
    <property type="entry name" value="ComplexI_49kDa-like"/>
</dbReference>
<dbReference type="InterPro" id="IPR001135">
    <property type="entry name" value="NADH_Q_OxRdtase_suD"/>
</dbReference>
<dbReference type="InterPro" id="IPR001501">
    <property type="entry name" value="Ni-dep_hyd_lsu"/>
</dbReference>
<dbReference type="InterPro" id="IPR029014">
    <property type="entry name" value="NiFe-Hase_large"/>
</dbReference>
<dbReference type="PANTHER" id="PTHR43485:SF1">
    <property type="entry name" value="FORMATE HYDROGENLYASE SUBUNIT 5-RELATED"/>
    <property type="match status" value="1"/>
</dbReference>
<dbReference type="PANTHER" id="PTHR43485">
    <property type="entry name" value="HYDROGENASE-4 COMPONENT G"/>
    <property type="match status" value="1"/>
</dbReference>
<dbReference type="Pfam" id="PF00346">
    <property type="entry name" value="Complex1_49kDa"/>
    <property type="match status" value="2"/>
</dbReference>
<dbReference type="Pfam" id="PF00374">
    <property type="entry name" value="NiFeSe_Hases"/>
    <property type="match status" value="1"/>
</dbReference>
<dbReference type="SUPFAM" id="SSF56762">
    <property type="entry name" value="HydB/Nqo4-like"/>
    <property type="match status" value="1"/>
</dbReference>
<accession>P31895</accession>
<keyword id="KW-0479">Metal-binding</keyword>
<keyword id="KW-0533">Nickel</keyword>
<keyword id="KW-0560">Oxidoreductase</keyword>